<gene>
    <name evidence="5" type="primary">Ushbp1</name>
</gene>
<name>USBP1_MOUSE</name>
<sequence>MSARATRPRSRRGRHPLPGELDPVAESSEEVDANNGRFETKPELHQEYLGPGLQSPRNWIKEGCDVGSHAVLSLSPEEQCEPEVEAHQVLQEAPLDSGPAEISVPSVYETLQCRLSSLEAVVAALRHHSLSFPKSVEAEDRDQGAPGPFGDEKEDAGPGQQEAARLIERNAWLRLALCNREDELACTQASLQDAQAEKETLQRQVQELEDSLMQMEASPPTPILRAGRRNSNSSTSGAERRPWVPQDSSMAHPFLQRLRSDSSTQSFGCLSTQHPAPETYLMEDQMGQLQGSIEKLKCFNRLLLAVLQGYKGRCESLSIKLAKREAEATALRLALQYSEDCEEVYEVLLALKMAGLGTGVGTTKGDLQAAEKEASRLLMKKEATMEVETPQPSSEGSGVDKPTPEELASQLHGYVQHLRERWALVKIPEELGPVTAPKATMPHAEATVQAILEIQPGPTLPHLEKSQIQQDLAATRDRLADLVLRLQLTQREKRGLELREAALRAQGPAHQLLLQQLRWERAHFAGDGSSGGSSEDPSSEEEAGEDRQQHYQGPLALLDGQMGKVWDSENVSQELSASLARAIDLRAQLQSLRQQLEQVTQKGRTRRVQSAELSRELCKAHSALALAFRGAHRKQEEQRLKLEQQVARLQAQQAEELAVLTATARALGKPGAPQPAQTFL</sequence>
<feature type="chain" id="PRO_0000252110" description="Harmonin-binding protein USHBP1">
    <location>
        <begin position="1"/>
        <end position="680"/>
    </location>
</feature>
<feature type="region of interest" description="Disordered" evidence="3">
    <location>
        <begin position="1"/>
        <end position="51"/>
    </location>
</feature>
<feature type="region of interest" description="Disordered" evidence="3">
    <location>
        <begin position="134"/>
        <end position="161"/>
    </location>
</feature>
<feature type="region of interest" description="Disordered" evidence="3">
    <location>
        <begin position="220"/>
        <end position="247"/>
    </location>
</feature>
<feature type="region of interest" description="Disordered" evidence="3">
    <location>
        <begin position="384"/>
        <end position="405"/>
    </location>
</feature>
<feature type="region of interest" description="Disordered" evidence="3">
    <location>
        <begin position="524"/>
        <end position="549"/>
    </location>
</feature>
<feature type="coiled-coil region" evidence="2">
    <location>
        <begin position="179"/>
        <end position="218"/>
    </location>
</feature>
<feature type="coiled-coil region" evidence="2">
    <location>
        <begin position="363"/>
        <end position="386"/>
    </location>
</feature>
<feature type="coiled-coil region" evidence="2">
    <location>
        <begin position="467"/>
        <end position="506"/>
    </location>
</feature>
<feature type="coiled-coil region" evidence="2">
    <location>
        <begin position="573"/>
        <end position="662"/>
    </location>
</feature>
<feature type="compositionally biased region" description="Basic residues" evidence="3">
    <location>
        <begin position="1"/>
        <end position="15"/>
    </location>
</feature>
<feature type="sequence conflict" description="In Ref. 2; AAH26453." evidence="4" ref="2">
    <original>R</original>
    <variation>C</variation>
    <location>
        <position position="37"/>
    </location>
</feature>
<feature type="sequence conflict" description="In Ref. 2; AAH26453." evidence="4" ref="2">
    <original>S</original>
    <variation>P</variation>
    <location>
        <position position="249"/>
    </location>
</feature>
<feature type="sequence conflict" description="In Ref. 2; AAH26453." evidence="4" ref="2">
    <original>M</original>
    <variation>V</variation>
    <location>
        <position position="379"/>
    </location>
</feature>
<feature type="sequence conflict" description="In Ref. 2; AAH26453." evidence="4" ref="2">
    <original>S</original>
    <variation>V</variation>
    <location>
        <position position="409"/>
    </location>
</feature>
<feature type="sequence conflict" description="In Ref. 2; AAH26453." evidence="4" ref="2">
    <original>R</original>
    <variation>S</variation>
    <location>
        <position position="478"/>
    </location>
</feature>
<feature type="sequence conflict" description="In Ref. 2; AAH26453." evidence="4" ref="2">
    <original>E</original>
    <variation>D</variation>
    <location>
        <position position="540"/>
    </location>
</feature>
<feature type="sequence conflict" description="In Ref. 2; AAH26453." evidence="4" ref="2">
    <original>Q</original>
    <variation>R</variation>
    <location>
        <position position="594"/>
    </location>
</feature>
<feature type="sequence conflict" description="In Ref. 2; AAH26453." evidence="4" ref="2">
    <original>L</original>
    <variation>R</variation>
    <location>
        <position position="640"/>
    </location>
</feature>
<protein>
    <recommendedName>
        <fullName evidence="4">Harmonin-binding protein USHBP1</fullName>
    </recommendedName>
    <alternativeName>
        <fullName>Usher syndrome type-1C protein-binding protein 1</fullName>
        <shortName>USH1C-binding protein 1</shortName>
    </alternativeName>
</protein>
<organism>
    <name type="scientific">Mus musculus</name>
    <name type="common">Mouse</name>
    <dbReference type="NCBI Taxonomy" id="10090"/>
    <lineage>
        <taxon>Eukaryota</taxon>
        <taxon>Metazoa</taxon>
        <taxon>Chordata</taxon>
        <taxon>Craniata</taxon>
        <taxon>Vertebrata</taxon>
        <taxon>Euteleostomi</taxon>
        <taxon>Mammalia</taxon>
        <taxon>Eutheria</taxon>
        <taxon>Euarchontoglires</taxon>
        <taxon>Glires</taxon>
        <taxon>Rodentia</taxon>
        <taxon>Myomorpha</taxon>
        <taxon>Muroidea</taxon>
        <taxon>Muridae</taxon>
        <taxon>Murinae</taxon>
        <taxon>Mus</taxon>
        <taxon>Mus</taxon>
    </lineage>
</organism>
<keyword id="KW-0175">Coiled coil</keyword>
<keyword id="KW-0903">Direct protein sequencing</keyword>
<keyword id="KW-1185">Reference proteome</keyword>
<evidence type="ECO:0000250" key="1">
    <source>
        <dbReference type="UniProtKB" id="Q8N6Y0"/>
    </source>
</evidence>
<evidence type="ECO:0000255" key="2"/>
<evidence type="ECO:0000256" key="3">
    <source>
        <dbReference type="SAM" id="MobiDB-lite"/>
    </source>
</evidence>
<evidence type="ECO:0000305" key="4"/>
<evidence type="ECO:0000312" key="5">
    <source>
        <dbReference type="EMBL" id="AAH26453.1"/>
    </source>
</evidence>
<comment type="subunit">
    <text evidence="1">Interacts via its C-terminus with the first PDZ domain of USH1C.</text>
</comment>
<comment type="similarity">
    <text evidence="4">Belongs to the MCC family.</text>
</comment>
<proteinExistence type="evidence at protein level"/>
<accession>Q8R370</accession>
<accession>E9QKT2</accession>
<reference key="1">
    <citation type="journal article" date="2009" name="PLoS Biol.">
        <title>Lineage-specific biology revealed by a finished genome assembly of the mouse.</title>
        <authorList>
            <person name="Church D.M."/>
            <person name="Goodstadt L."/>
            <person name="Hillier L.W."/>
            <person name="Zody M.C."/>
            <person name="Goldstein S."/>
            <person name="She X."/>
            <person name="Bult C.J."/>
            <person name="Agarwala R."/>
            <person name="Cherry J.L."/>
            <person name="DiCuccio M."/>
            <person name="Hlavina W."/>
            <person name="Kapustin Y."/>
            <person name="Meric P."/>
            <person name="Maglott D."/>
            <person name="Birtle Z."/>
            <person name="Marques A.C."/>
            <person name="Graves T."/>
            <person name="Zhou S."/>
            <person name="Teague B."/>
            <person name="Potamousis K."/>
            <person name="Churas C."/>
            <person name="Place M."/>
            <person name="Herschleb J."/>
            <person name="Runnheim R."/>
            <person name="Forrest D."/>
            <person name="Amos-Landgraf J."/>
            <person name="Schwartz D.C."/>
            <person name="Cheng Z."/>
            <person name="Lindblad-Toh K."/>
            <person name="Eichler E.E."/>
            <person name="Ponting C.P."/>
        </authorList>
    </citation>
    <scope>NUCLEOTIDE SEQUENCE [LARGE SCALE GENOMIC DNA]</scope>
    <source>
        <strain>C57BL/6J</strain>
    </source>
</reference>
<reference evidence="5" key="2">
    <citation type="journal article" date="2004" name="Genome Res.">
        <title>The status, quality, and expansion of the NIH full-length cDNA project: the Mammalian Gene Collection (MGC).</title>
        <authorList>
            <consortium name="The MGC Project Team"/>
        </authorList>
    </citation>
    <scope>NUCLEOTIDE SEQUENCE [LARGE SCALE MRNA]</scope>
    <source>
        <strain evidence="5">FVB/N</strain>
        <tissue evidence="5">Mammary gland</tissue>
    </source>
</reference>
<reference key="3">
    <citation type="submission" date="2009-01" db="UniProtKB">
        <authorList>
            <person name="Lubec G."/>
            <person name="Sunyer B."/>
            <person name="Chen W.-Q."/>
        </authorList>
    </citation>
    <scope>PROTEIN SEQUENCE OF 324-332</scope>
    <scope>IDENTIFICATION BY MASS SPECTROMETRY</scope>
    <source>
        <strain>OF1</strain>
        <tissue>Hippocampus</tissue>
    </source>
</reference>
<dbReference type="EMBL" id="AC127416">
    <property type="status" value="NOT_ANNOTATED_CDS"/>
    <property type="molecule type" value="Genomic_DNA"/>
</dbReference>
<dbReference type="EMBL" id="BC026453">
    <property type="protein sequence ID" value="AAH26453.1"/>
    <property type="molecule type" value="mRNA"/>
</dbReference>
<dbReference type="CCDS" id="CCDS22393.1"/>
<dbReference type="RefSeq" id="NP_852083.2">
    <property type="nucleotide sequence ID" value="NM_181418.3"/>
</dbReference>
<dbReference type="SMR" id="Q8R370"/>
<dbReference type="FunCoup" id="Q8R370">
    <property type="interactions" value="1"/>
</dbReference>
<dbReference type="STRING" id="10090.ENSMUSP00000045668"/>
<dbReference type="GlyGen" id="Q8R370">
    <property type="glycosylation" value="1 site"/>
</dbReference>
<dbReference type="iPTMnet" id="Q8R370"/>
<dbReference type="PhosphoSitePlus" id="Q8R370"/>
<dbReference type="PaxDb" id="10090-ENSMUSP00000045668"/>
<dbReference type="ProteomicsDB" id="297900"/>
<dbReference type="Antibodypedia" id="65308">
    <property type="antibodies" value="37 antibodies from 14 providers"/>
</dbReference>
<dbReference type="DNASU" id="234395"/>
<dbReference type="Ensembl" id="ENSMUST00000049184.9">
    <property type="protein sequence ID" value="ENSMUSP00000045668.8"/>
    <property type="gene ID" value="ENSMUSG00000034911.9"/>
</dbReference>
<dbReference type="GeneID" id="234395"/>
<dbReference type="KEGG" id="mmu:234395"/>
<dbReference type="UCSC" id="uc009mcz.2">
    <property type="organism name" value="mouse"/>
</dbReference>
<dbReference type="AGR" id="MGI:1922920"/>
<dbReference type="CTD" id="83878"/>
<dbReference type="MGI" id="MGI:1922920">
    <property type="gene designation" value="Ushbp1"/>
</dbReference>
<dbReference type="VEuPathDB" id="HostDB:ENSMUSG00000034911"/>
<dbReference type="eggNOG" id="KOG3512">
    <property type="taxonomic scope" value="Eukaryota"/>
</dbReference>
<dbReference type="GeneTree" id="ENSGT00530000063974"/>
<dbReference type="HOGENOM" id="CLU_024579_0_0_1"/>
<dbReference type="InParanoid" id="Q8R370"/>
<dbReference type="OMA" id="RELCKAH"/>
<dbReference type="OrthoDB" id="6256369at2759"/>
<dbReference type="PhylomeDB" id="Q8R370"/>
<dbReference type="TreeFam" id="TF105384"/>
<dbReference type="BioGRID-ORCS" id="234395">
    <property type="hits" value="4 hits in 77 CRISPR screens"/>
</dbReference>
<dbReference type="PRO" id="PR:Q8R370"/>
<dbReference type="Proteomes" id="UP000000589">
    <property type="component" value="Chromosome 8"/>
</dbReference>
<dbReference type="RNAct" id="Q8R370">
    <property type="molecule type" value="protein"/>
</dbReference>
<dbReference type="Bgee" id="ENSMUSG00000034911">
    <property type="expression patterns" value="Expressed in interventricular septum and 123 other cell types or tissues"/>
</dbReference>
<dbReference type="ExpressionAtlas" id="Q8R370">
    <property type="expression patterns" value="baseline and differential"/>
</dbReference>
<dbReference type="GO" id="GO:0030165">
    <property type="term" value="F:PDZ domain binding"/>
    <property type="evidence" value="ECO:0000266"/>
    <property type="project" value="MGI"/>
</dbReference>
<dbReference type="InterPro" id="IPR040171">
    <property type="entry name" value="USBP1-like"/>
</dbReference>
<dbReference type="InterPro" id="IPR019536">
    <property type="entry name" value="USHBP1_PDZ-bd"/>
</dbReference>
<dbReference type="PANTHER" id="PTHR23347">
    <property type="entry name" value="COLORECTAL MUTANT CANCER PROTEIN MCC PROTEIN -RELATED"/>
    <property type="match status" value="1"/>
</dbReference>
<dbReference type="PANTHER" id="PTHR23347:SF5">
    <property type="entry name" value="HARMONIN-BINDING PROTEIN USHBP1"/>
    <property type="match status" value="1"/>
</dbReference>
<dbReference type="Pfam" id="PF10506">
    <property type="entry name" value="USHBP1_PDZ-bd"/>
    <property type="match status" value="1"/>
</dbReference>